<protein>
    <recommendedName>
        <fullName>Probable acetolactate synthase small subunit</fullName>
        <ecNumber>2.2.1.6</ecNumber>
    </recommendedName>
    <alternativeName>
        <fullName>Acetohydroxy-acid synthase small subunit</fullName>
        <shortName>AHAS</shortName>
        <shortName>ALS</shortName>
    </alternativeName>
</protein>
<organism>
    <name type="scientific">Methanothermobacter thermautotrophicus (strain ATCC 29096 / DSM 1053 / JCM 10044 / NBRC 100330 / Delta H)</name>
    <name type="common">Methanobacterium thermoautotrophicum</name>
    <dbReference type="NCBI Taxonomy" id="187420"/>
    <lineage>
        <taxon>Archaea</taxon>
        <taxon>Methanobacteriati</taxon>
        <taxon>Methanobacteriota</taxon>
        <taxon>Methanomada group</taxon>
        <taxon>Methanobacteria</taxon>
        <taxon>Methanobacteriales</taxon>
        <taxon>Methanobacteriaceae</taxon>
        <taxon>Methanothermobacter</taxon>
    </lineage>
</organism>
<accession>O27492</accession>
<dbReference type="EC" id="2.2.1.6"/>
<dbReference type="EMBL" id="AE000666">
    <property type="protein sequence ID" value="AAB85918.1"/>
    <property type="molecule type" value="Genomic_DNA"/>
</dbReference>
<dbReference type="PIR" id="B69059">
    <property type="entry name" value="B69059"/>
</dbReference>
<dbReference type="SMR" id="O27492"/>
<dbReference type="FunCoup" id="O27492">
    <property type="interactions" value="87"/>
</dbReference>
<dbReference type="STRING" id="187420.MTH_1443"/>
<dbReference type="PaxDb" id="187420-MTH_1443"/>
<dbReference type="EnsemblBacteria" id="AAB85918">
    <property type="protein sequence ID" value="AAB85918"/>
    <property type="gene ID" value="MTH_1443"/>
</dbReference>
<dbReference type="KEGG" id="mth:MTH_1443"/>
<dbReference type="PATRIC" id="fig|187420.15.peg.1405"/>
<dbReference type="HOGENOM" id="CLU_055003_1_3_2"/>
<dbReference type="InParanoid" id="O27492"/>
<dbReference type="UniPathway" id="UPA00047">
    <property type="reaction ID" value="UER00055"/>
</dbReference>
<dbReference type="UniPathway" id="UPA00049">
    <property type="reaction ID" value="UER00059"/>
</dbReference>
<dbReference type="Proteomes" id="UP000005223">
    <property type="component" value="Chromosome"/>
</dbReference>
<dbReference type="GO" id="GO:0005829">
    <property type="term" value="C:cytosol"/>
    <property type="evidence" value="ECO:0007669"/>
    <property type="project" value="TreeGrafter"/>
</dbReference>
<dbReference type="GO" id="GO:0003984">
    <property type="term" value="F:acetolactate synthase activity"/>
    <property type="evidence" value="ECO:0007669"/>
    <property type="project" value="UniProtKB-EC"/>
</dbReference>
<dbReference type="GO" id="GO:1990610">
    <property type="term" value="F:acetolactate synthase regulator activity"/>
    <property type="evidence" value="ECO:0007669"/>
    <property type="project" value="InterPro"/>
</dbReference>
<dbReference type="GO" id="GO:0009097">
    <property type="term" value="P:isoleucine biosynthetic process"/>
    <property type="evidence" value="ECO:0007669"/>
    <property type="project" value="UniProtKB-UniPathway"/>
</dbReference>
<dbReference type="GO" id="GO:0009099">
    <property type="term" value="P:L-valine biosynthetic process"/>
    <property type="evidence" value="ECO:0007669"/>
    <property type="project" value="UniProtKB-UniPathway"/>
</dbReference>
<dbReference type="CDD" id="cd04878">
    <property type="entry name" value="ACT_AHAS"/>
    <property type="match status" value="1"/>
</dbReference>
<dbReference type="FunFam" id="3.30.70.1150:FF:000001">
    <property type="entry name" value="Acetolactate synthase small subunit"/>
    <property type="match status" value="1"/>
</dbReference>
<dbReference type="FunFam" id="3.30.70.260:FF:000001">
    <property type="entry name" value="Acetolactate synthase, small subunit"/>
    <property type="match status" value="1"/>
</dbReference>
<dbReference type="Gene3D" id="3.30.70.260">
    <property type="match status" value="1"/>
</dbReference>
<dbReference type="Gene3D" id="3.30.70.1150">
    <property type="entry name" value="ACT-like. Chain A, domain 2"/>
    <property type="match status" value="1"/>
</dbReference>
<dbReference type="InterPro" id="IPR004789">
    <property type="entry name" value="Acetalactate_synth_ssu"/>
</dbReference>
<dbReference type="InterPro" id="IPR027271">
    <property type="entry name" value="Acetolactate_synth/TF_NikR_C"/>
</dbReference>
<dbReference type="InterPro" id="IPR019455">
    <property type="entry name" value="Acetolactate_synth_ssu_C"/>
</dbReference>
<dbReference type="InterPro" id="IPR045865">
    <property type="entry name" value="ACT-like_dom_sf"/>
</dbReference>
<dbReference type="InterPro" id="IPR002912">
    <property type="entry name" value="ACT_dom"/>
</dbReference>
<dbReference type="InterPro" id="IPR039557">
    <property type="entry name" value="AHAS_ACT"/>
</dbReference>
<dbReference type="InterPro" id="IPR054480">
    <property type="entry name" value="AHAS_small-like_ACT"/>
</dbReference>
<dbReference type="NCBIfam" id="TIGR00119">
    <property type="entry name" value="acolac_sm"/>
    <property type="match status" value="1"/>
</dbReference>
<dbReference type="NCBIfam" id="NF008864">
    <property type="entry name" value="PRK11895.1"/>
    <property type="match status" value="1"/>
</dbReference>
<dbReference type="PANTHER" id="PTHR30239">
    <property type="entry name" value="ACETOLACTATE SYNTHASE SMALL SUBUNIT"/>
    <property type="match status" value="1"/>
</dbReference>
<dbReference type="PANTHER" id="PTHR30239:SF0">
    <property type="entry name" value="ACETOLACTATE SYNTHASE SMALL SUBUNIT 1, CHLOROPLASTIC"/>
    <property type="match status" value="1"/>
</dbReference>
<dbReference type="Pfam" id="PF22629">
    <property type="entry name" value="ACT_AHAS_ss"/>
    <property type="match status" value="1"/>
</dbReference>
<dbReference type="Pfam" id="PF10369">
    <property type="entry name" value="ALS_ss_C"/>
    <property type="match status" value="1"/>
</dbReference>
<dbReference type="SUPFAM" id="SSF55021">
    <property type="entry name" value="ACT-like"/>
    <property type="match status" value="2"/>
</dbReference>
<dbReference type="PROSITE" id="PS51671">
    <property type="entry name" value="ACT"/>
    <property type="match status" value="1"/>
</dbReference>
<reference key="1">
    <citation type="journal article" date="1997" name="J. Bacteriol.">
        <title>Complete genome sequence of Methanobacterium thermoautotrophicum deltaH: functional analysis and comparative genomics.</title>
        <authorList>
            <person name="Smith D.R."/>
            <person name="Doucette-Stamm L.A."/>
            <person name="Deloughery C."/>
            <person name="Lee H.-M."/>
            <person name="Dubois J."/>
            <person name="Aldredge T."/>
            <person name="Bashirzadeh R."/>
            <person name="Blakely D."/>
            <person name="Cook R."/>
            <person name="Gilbert K."/>
            <person name="Harrison D."/>
            <person name="Hoang L."/>
            <person name="Keagle P."/>
            <person name="Lumm W."/>
            <person name="Pothier B."/>
            <person name="Qiu D."/>
            <person name="Spadafora R."/>
            <person name="Vicare R."/>
            <person name="Wang Y."/>
            <person name="Wierzbowski J."/>
            <person name="Gibson R."/>
            <person name="Jiwani N."/>
            <person name="Caruso A."/>
            <person name="Bush D."/>
            <person name="Safer H."/>
            <person name="Patwell D."/>
            <person name="Prabhakar S."/>
            <person name="McDougall S."/>
            <person name="Shimer G."/>
            <person name="Goyal A."/>
            <person name="Pietrovski S."/>
            <person name="Church G.M."/>
            <person name="Daniels C.J."/>
            <person name="Mao J.-I."/>
            <person name="Rice P."/>
            <person name="Noelling J."/>
            <person name="Reeve J.N."/>
        </authorList>
    </citation>
    <scope>NUCLEOTIDE SEQUENCE [LARGE SCALE GENOMIC DNA]</scope>
    <source>
        <strain>ATCC 29096 / DSM 1053 / JCM 10044 / NBRC 100330 / Delta H</strain>
    </source>
</reference>
<comment type="catalytic activity">
    <reaction>
        <text>2 pyruvate + H(+) = (2S)-2-acetolactate + CO2</text>
        <dbReference type="Rhea" id="RHEA:25249"/>
        <dbReference type="ChEBI" id="CHEBI:15361"/>
        <dbReference type="ChEBI" id="CHEBI:15378"/>
        <dbReference type="ChEBI" id="CHEBI:16526"/>
        <dbReference type="ChEBI" id="CHEBI:58476"/>
        <dbReference type="EC" id="2.2.1.6"/>
    </reaction>
</comment>
<comment type="pathway">
    <text>Amino-acid biosynthesis; L-isoleucine biosynthesis; L-isoleucine from 2-oxobutanoate: step 1/4.</text>
</comment>
<comment type="pathway">
    <text>Amino-acid biosynthesis; L-valine biosynthesis; L-valine from pyruvate: step 1/4.</text>
</comment>
<comment type="subunit">
    <text evidence="1">Dimer of large and small chains.</text>
</comment>
<comment type="similarity">
    <text evidence="3">Belongs to the acetolactate synthase small subunit family.</text>
</comment>
<evidence type="ECO:0000250" key="1"/>
<evidence type="ECO:0000255" key="2">
    <source>
        <dbReference type="PROSITE-ProRule" id="PRU01007"/>
    </source>
</evidence>
<evidence type="ECO:0000305" key="3"/>
<sequence length="168" mass="18742">MIEMEPDTHIISALVEHKPGVLQRVAGLFTRRGFNIENITVGESETPGIARMTIIARGDDRVLEQITKQLNKLIDVIKVRDLEPAATVKRELCMVKVHAPSESERSEIIQYTNIFRGRIVDVSPDALTVEVTGDSEKIDAFLELLRNFGIKELARTGPTAMSRGSRTM</sequence>
<keyword id="KW-0028">Amino-acid biosynthesis</keyword>
<keyword id="KW-0100">Branched-chain amino acid biosynthesis</keyword>
<keyword id="KW-1185">Reference proteome</keyword>
<keyword id="KW-0808">Transferase</keyword>
<name>ILVH_METTH</name>
<gene>
    <name type="primary">ilvH</name>
    <name type="ordered locus">MTH_1443</name>
</gene>
<proteinExistence type="inferred from homology"/>
<feature type="chain" id="PRO_0000151424" description="Probable acetolactate synthase small subunit">
    <location>
        <begin position="1"/>
        <end position="168"/>
    </location>
</feature>
<feature type="domain" description="ACT" evidence="2">
    <location>
        <begin position="10"/>
        <end position="84"/>
    </location>
</feature>